<feature type="chain" id="PRO_0000453156" description="Probable inorganic carbon transporter subunit DabB1">
    <location>
        <begin position="1"/>
        <end position="559"/>
    </location>
</feature>
<feature type="transmembrane region" description="Helical" evidence="1">
    <location>
        <begin position="4"/>
        <end position="24"/>
    </location>
</feature>
<feature type="transmembrane region" description="Helical" evidence="1">
    <location>
        <begin position="33"/>
        <end position="53"/>
    </location>
</feature>
<feature type="transmembrane region" description="Helical" evidence="1">
    <location>
        <begin position="76"/>
        <end position="96"/>
    </location>
</feature>
<feature type="transmembrane region" description="Helical" evidence="1">
    <location>
        <begin position="106"/>
        <end position="126"/>
    </location>
</feature>
<feature type="transmembrane region" description="Helical" evidence="1">
    <location>
        <begin position="173"/>
        <end position="193"/>
    </location>
</feature>
<feature type="transmembrane region" description="Helical" evidence="1">
    <location>
        <begin position="202"/>
        <end position="222"/>
    </location>
</feature>
<feature type="transmembrane region" description="Helical" evidence="1">
    <location>
        <begin position="240"/>
        <end position="260"/>
    </location>
</feature>
<feature type="transmembrane region" description="Helical" evidence="1">
    <location>
        <begin position="273"/>
        <end position="293"/>
    </location>
</feature>
<feature type="transmembrane region" description="Helical" evidence="1">
    <location>
        <begin position="310"/>
        <end position="330"/>
    </location>
</feature>
<feature type="transmembrane region" description="Helical" evidence="1">
    <location>
        <begin position="375"/>
        <end position="395"/>
    </location>
</feature>
<feature type="transmembrane region" description="Helical" evidence="1">
    <location>
        <begin position="408"/>
        <end position="428"/>
    </location>
</feature>
<feature type="transmembrane region" description="Helical" evidence="1">
    <location>
        <begin position="440"/>
        <end position="460"/>
    </location>
</feature>
<feature type="transmembrane region" description="Helical" evidence="1">
    <location>
        <begin position="487"/>
        <end position="507"/>
    </location>
</feature>
<sequence length="559" mass="62165">MMNLQWLIPLLPLLSALLVQLFAARLGKRVAHLSVALGTLTVIVAAYQLVAYIGTDASPSWHSLGTMWGSLYVDPLSSIMSLVVAGISLIVHVYSIRYMTEEPGYPRFFLLLDLMTASILLMVAAGDLVTLLIAWHMIGIMLYFLLGQNTESWPSQRYAFWTFITYRLGDLPLVLAAVLLYQTYGAIDFPTLFSRIAADPNATIMGLPTAITAAFLVALSAFAKSAQFPLHTWLPYTMEGPTPVSALMHAGIVNAGGFIINRFAPVFVHSDGVLHMLFVVGLITALVGSVLMLTQNDIKKSLGYSTMGQMGFMVMECGLGAFSLAVFHLIAHGLFKGTMFLGSGSMIHEARKHDGVPHNPLHTFLVERKSASLKLPWLFIGLATLVVPLFILVIAHWFVAPDFFEKQGAIVLLFFGWITGVQVLFATHHLDANNPIRMMMMILLSFTLIVVGYTFIGHAFENFLYPEEAFRNALYHAAGIDKLTFDGLVFLLALIVVAGWFSSYLASREKSVFGDRFGAVRLTLYSLISREFYVADLYDRMAHWLLDASKRFNVWMRWY</sequence>
<accession>D0KZ79</accession>
<proteinExistence type="inferred from homology"/>
<reference key="1">
    <citation type="submission" date="2009-10" db="EMBL/GenBank/DDBJ databases">
        <title>Complete sequence of Halothiobacillus neapolitanus c2.</title>
        <authorList>
            <consortium name="US DOE Joint Genome Institute"/>
            <person name="Lucas S."/>
            <person name="Copeland A."/>
            <person name="Lapidus A."/>
            <person name="Glavina del Rio T."/>
            <person name="Tice H."/>
            <person name="Bruce D."/>
            <person name="Goodwin L."/>
            <person name="Pitluck S."/>
            <person name="Davenport K."/>
            <person name="Brettin T."/>
            <person name="Detter J.C."/>
            <person name="Han C."/>
            <person name="Tapia R."/>
            <person name="Larimer F."/>
            <person name="Land M."/>
            <person name="Hauser L."/>
            <person name="Kyrpides N."/>
            <person name="Mikhailova N."/>
            <person name="Kerfeld C."/>
            <person name="Cannon G."/>
            <person name="Heinhort S."/>
        </authorList>
    </citation>
    <scope>NUCLEOTIDE SEQUENCE [LARGE SCALE GENOMIC DNA]</scope>
    <source>
        <strain>ATCC 23641 / c2</strain>
    </source>
</reference>
<reference key="2">
    <citation type="journal article" date="2019" name="Nat. Microbiol.">
        <title>DABs are inorganic carbon pumps found throughout prokaryotic phyla.</title>
        <authorList>
            <person name="Desmarais J.J."/>
            <person name="Flamholz A.I."/>
            <person name="Blikstad C."/>
            <person name="Dugan E.J."/>
            <person name="Laughlin T.G."/>
            <person name="Oltrogge L.M."/>
            <person name="Chen A.W."/>
            <person name="Wetmore K."/>
            <person name="Diamond S."/>
            <person name="Wang J.Y."/>
            <person name="Savage D.F."/>
        </authorList>
    </citation>
    <scope>FUNCTION</scope>
    <scope>DISRUPTION PHENOTYPE</scope>
    <source>
        <strain>ATCC 23641 / c2</strain>
    </source>
</reference>
<keyword id="KW-0997">Cell inner membrane</keyword>
<keyword id="KW-1003">Cell membrane</keyword>
<keyword id="KW-0472">Membrane</keyword>
<keyword id="KW-1185">Reference proteome</keyword>
<keyword id="KW-0812">Transmembrane</keyword>
<keyword id="KW-1133">Transmembrane helix</keyword>
<keyword id="KW-0813">Transport</keyword>
<dbReference type="EMBL" id="CP001801">
    <property type="protein sequence ID" value="ACX95752.1"/>
    <property type="molecule type" value="Genomic_DNA"/>
</dbReference>
<dbReference type="RefSeq" id="WP_012823788.1">
    <property type="nucleotide sequence ID" value="NC_013422.1"/>
</dbReference>
<dbReference type="SMR" id="D0KZ79"/>
<dbReference type="STRING" id="555778.Hneap_0909"/>
<dbReference type="KEGG" id="hna:Hneap_0909"/>
<dbReference type="eggNOG" id="COG1009">
    <property type="taxonomic scope" value="Bacteria"/>
</dbReference>
<dbReference type="HOGENOM" id="CLU_007100_11_0_6"/>
<dbReference type="OrthoDB" id="9811798at2"/>
<dbReference type="Proteomes" id="UP000009102">
    <property type="component" value="Chromosome"/>
</dbReference>
<dbReference type="GO" id="GO:0005886">
    <property type="term" value="C:plasma membrane"/>
    <property type="evidence" value="ECO:0007669"/>
    <property type="project" value="UniProtKB-SubCell"/>
</dbReference>
<dbReference type="GO" id="GO:0008137">
    <property type="term" value="F:NADH dehydrogenase (ubiquinone) activity"/>
    <property type="evidence" value="ECO:0007669"/>
    <property type="project" value="InterPro"/>
</dbReference>
<dbReference type="GO" id="GO:0042773">
    <property type="term" value="P:ATP synthesis coupled electron transport"/>
    <property type="evidence" value="ECO:0007669"/>
    <property type="project" value="InterPro"/>
</dbReference>
<dbReference type="GO" id="GO:0015990">
    <property type="term" value="P:electron transport coupled proton transport"/>
    <property type="evidence" value="ECO:0007669"/>
    <property type="project" value="TreeGrafter"/>
</dbReference>
<dbReference type="HAMAP" id="MF_00862">
    <property type="entry name" value="DabB"/>
    <property type="match status" value="1"/>
</dbReference>
<dbReference type="InterPro" id="IPR001750">
    <property type="entry name" value="ND/Mrp_TM"/>
</dbReference>
<dbReference type="InterPro" id="IPR003945">
    <property type="entry name" value="NU5C-like"/>
</dbReference>
<dbReference type="InterPro" id="IPR001516">
    <property type="entry name" value="Proton_antipo_N"/>
</dbReference>
<dbReference type="InterPro" id="IPR046396">
    <property type="entry name" value="Transporter_DabB"/>
</dbReference>
<dbReference type="PANTHER" id="PTHR42829:SF1">
    <property type="entry name" value="INORGANIC CARBON TRANSPORTER SUBUNIT DABB-RELATED"/>
    <property type="match status" value="1"/>
</dbReference>
<dbReference type="PANTHER" id="PTHR42829">
    <property type="entry name" value="NADH-UBIQUINONE OXIDOREDUCTASE CHAIN 5"/>
    <property type="match status" value="1"/>
</dbReference>
<dbReference type="Pfam" id="PF00361">
    <property type="entry name" value="Proton_antipo_M"/>
    <property type="match status" value="1"/>
</dbReference>
<dbReference type="Pfam" id="PF00662">
    <property type="entry name" value="Proton_antipo_N"/>
    <property type="match status" value="1"/>
</dbReference>
<dbReference type="PRINTS" id="PR01434">
    <property type="entry name" value="NADHDHGNASE5"/>
</dbReference>
<dbReference type="PRINTS" id="PR01435">
    <property type="entry name" value="NPOXDRDTASE5"/>
</dbReference>
<gene>
    <name evidence="3" type="primary">dabB1</name>
    <name evidence="5" type="ordered locus">Hneap_0909</name>
</gene>
<protein>
    <recommendedName>
        <fullName evidence="3">Probable inorganic carbon transporter subunit DabB1</fullName>
    </recommendedName>
</protein>
<organism>
    <name type="scientific">Halothiobacillus neapolitanus (strain ATCC 23641 / c2)</name>
    <name type="common">Thiobacillus neapolitanus</name>
    <dbReference type="NCBI Taxonomy" id="555778"/>
    <lineage>
        <taxon>Bacteria</taxon>
        <taxon>Pseudomonadati</taxon>
        <taxon>Pseudomonadota</taxon>
        <taxon>Gammaproteobacteria</taxon>
        <taxon>Chromatiales</taxon>
        <taxon>Halothiobacillaceae</taxon>
        <taxon>Halothiobacillus</taxon>
    </lineage>
</organism>
<evidence type="ECO:0000255" key="1">
    <source>
        <dbReference type="HAMAP-Rule" id="MF_00862"/>
    </source>
</evidence>
<evidence type="ECO:0000269" key="2">
    <source>
    </source>
</evidence>
<evidence type="ECO:0000303" key="3">
    <source>
    </source>
</evidence>
<evidence type="ECO:0000305" key="4">
    <source>
    </source>
</evidence>
<evidence type="ECO:0000312" key="5">
    <source>
        <dbReference type="EMBL" id="ACX95752.1"/>
    </source>
</evidence>
<name>DABB1_HALNC</name>
<comment type="function">
    <text evidence="1 4">Part of an energy-coupled inorganic carbon pump.</text>
</comment>
<comment type="subunit">
    <text evidence="1">Forms a complex with DabA1.</text>
</comment>
<comment type="subcellular location">
    <subcellularLocation>
        <location evidence="1 4">Cell inner membrane</location>
        <topology evidence="1">Multi-pass membrane protein</topology>
    </subcellularLocation>
</comment>
<comment type="disruption phenotype">
    <text evidence="2">Required for growth in ambient air.</text>
</comment>
<comment type="similarity">
    <text evidence="1">Belongs to the inorganic carbon transporter (TC 9.A.2) DabB family.</text>
</comment>